<comment type="function">
    <text evidence="1">Aspartyl-tRNA synthetase with relaxed tRNA specificity since it is able to aspartylate not only its cognate tRNA(Asp) but also tRNA(Asn). Reaction proceeds in two steps: L-aspartate is first activated by ATP to form Asp-AMP and then transferred to the acceptor end of tRNA(Asp/Asn).</text>
</comment>
<comment type="catalytic activity">
    <reaction evidence="1">
        <text>tRNA(Asx) + L-aspartate + ATP = L-aspartyl-tRNA(Asx) + AMP + diphosphate</text>
        <dbReference type="Rhea" id="RHEA:18349"/>
        <dbReference type="Rhea" id="RHEA-COMP:9710"/>
        <dbReference type="Rhea" id="RHEA-COMP:9711"/>
        <dbReference type="ChEBI" id="CHEBI:29991"/>
        <dbReference type="ChEBI" id="CHEBI:30616"/>
        <dbReference type="ChEBI" id="CHEBI:33019"/>
        <dbReference type="ChEBI" id="CHEBI:78442"/>
        <dbReference type="ChEBI" id="CHEBI:78516"/>
        <dbReference type="ChEBI" id="CHEBI:456215"/>
        <dbReference type="EC" id="6.1.1.23"/>
    </reaction>
</comment>
<comment type="subunit">
    <text evidence="1">Homodimer.</text>
</comment>
<comment type="subcellular location">
    <subcellularLocation>
        <location evidence="1">Cytoplasm</location>
    </subcellularLocation>
</comment>
<comment type="similarity">
    <text evidence="1">Belongs to the class-II aminoacyl-tRNA synthetase family. Type 1 subfamily.</text>
</comment>
<organism>
    <name type="scientific">Rhodopseudomonas palustris (strain BisA53)</name>
    <dbReference type="NCBI Taxonomy" id="316055"/>
    <lineage>
        <taxon>Bacteria</taxon>
        <taxon>Pseudomonadati</taxon>
        <taxon>Pseudomonadota</taxon>
        <taxon>Alphaproteobacteria</taxon>
        <taxon>Hyphomicrobiales</taxon>
        <taxon>Nitrobacteraceae</taxon>
        <taxon>Rhodopseudomonas</taxon>
    </lineage>
</organism>
<name>SYDND_RHOP5</name>
<reference key="1">
    <citation type="submission" date="2006-09" db="EMBL/GenBank/DDBJ databases">
        <title>Complete sequence of Rhodopseudomonas palustris BisA53.</title>
        <authorList>
            <consortium name="US DOE Joint Genome Institute"/>
            <person name="Copeland A."/>
            <person name="Lucas S."/>
            <person name="Lapidus A."/>
            <person name="Barry K."/>
            <person name="Detter J.C."/>
            <person name="Glavina del Rio T."/>
            <person name="Hammon N."/>
            <person name="Israni S."/>
            <person name="Dalin E."/>
            <person name="Tice H."/>
            <person name="Pitluck S."/>
            <person name="Chain P."/>
            <person name="Malfatti S."/>
            <person name="Shin M."/>
            <person name="Vergez L."/>
            <person name="Schmutz J."/>
            <person name="Larimer F."/>
            <person name="Land M."/>
            <person name="Hauser L."/>
            <person name="Pelletier D.A."/>
            <person name="Kyrpides N."/>
            <person name="Kim E."/>
            <person name="Harwood C.S."/>
            <person name="Oda Y."/>
            <person name="Richardson P."/>
        </authorList>
    </citation>
    <scope>NUCLEOTIDE SEQUENCE [LARGE SCALE GENOMIC DNA]</scope>
    <source>
        <strain>BisA53</strain>
    </source>
</reference>
<evidence type="ECO:0000255" key="1">
    <source>
        <dbReference type="HAMAP-Rule" id="MF_00044"/>
    </source>
</evidence>
<gene>
    <name evidence="1" type="primary">aspS</name>
    <name type="ordered locus">RPE_3276</name>
</gene>
<accession>Q07LH5</accession>
<proteinExistence type="inferred from homology"/>
<protein>
    <recommendedName>
        <fullName evidence="1">Aspartate--tRNA(Asp/Asn) ligase</fullName>
        <ecNumber evidence="1">6.1.1.23</ecNumber>
    </recommendedName>
    <alternativeName>
        <fullName evidence="1">Aspartyl-tRNA synthetase</fullName>
        <shortName evidence="1">AspRS</shortName>
    </alternativeName>
    <alternativeName>
        <fullName evidence="1">Non-discriminating aspartyl-tRNA synthetase</fullName>
        <shortName evidence="1">ND-AspRS</shortName>
    </alternativeName>
</protein>
<dbReference type="EC" id="6.1.1.23" evidence="1"/>
<dbReference type="EMBL" id="CP000463">
    <property type="protein sequence ID" value="ABJ07209.1"/>
    <property type="molecule type" value="Genomic_DNA"/>
</dbReference>
<dbReference type="SMR" id="Q07LH5"/>
<dbReference type="STRING" id="316055.RPE_3276"/>
<dbReference type="KEGG" id="rpe:RPE_3276"/>
<dbReference type="eggNOG" id="COG0173">
    <property type="taxonomic scope" value="Bacteria"/>
</dbReference>
<dbReference type="HOGENOM" id="CLU_014330_3_2_5"/>
<dbReference type="OrthoDB" id="9802326at2"/>
<dbReference type="GO" id="GO:0005737">
    <property type="term" value="C:cytoplasm"/>
    <property type="evidence" value="ECO:0007669"/>
    <property type="project" value="UniProtKB-SubCell"/>
</dbReference>
<dbReference type="GO" id="GO:0004815">
    <property type="term" value="F:aspartate-tRNA ligase activity"/>
    <property type="evidence" value="ECO:0007669"/>
    <property type="project" value="UniProtKB-UniRule"/>
</dbReference>
<dbReference type="GO" id="GO:0050560">
    <property type="term" value="F:aspartate-tRNA(Asn) ligase activity"/>
    <property type="evidence" value="ECO:0007669"/>
    <property type="project" value="UniProtKB-EC"/>
</dbReference>
<dbReference type="GO" id="GO:0005524">
    <property type="term" value="F:ATP binding"/>
    <property type="evidence" value="ECO:0007669"/>
    <property type="project" value="UniProtKB-UniRule"/>
</dbReference>
<dbReference type="GO" id="GO:0003676">
    <property type="term" value="F:nucleic acid binding"/>
    <property type="evidence" value="ECO:0007669"/>
    <property type="project" value="InterPro"/>
</dbReference>
<dbReference type="GO" id="GO:0006422">
    <property type="term" value="P:aspartyl-tRNA aminoacylation"/>
    <property type="evidence" value="ECO:0007669"/>
    <property type="project" value="UniProtKB-UniRule"/>
</dbReference>
<dbReference type="CDD" id="cd00777">
    <property type="entry name" value="AspRS_core"/>
    <property type="match status" value="1"/>
</dbReference>
<dbReference type="CDD" id="cd04317">
    <property type="entry name" value="EcAspRS_like_N"/>
    <property type="match status" value="1"/>
</dbReference>
<dbReference type="Gene3D" id="3.30.930.10">
    <property type="entry name" value="Bira Bifunctional Protein, Domain 2"/>
    <property type="match status" value="1"/>
</dbReference>
<dbReference type="Gene3D" id="3.30.1360.30">
    <property type="entry name" value="GAD-like domain"/>
    <property type="match status" value="1"/>
</dbReference>
<dbReference type="Gene3D" id="2.40.50.140">
    <property type="entry name" value="Nucleic acid-binding proteins"/>
    <property type="match status" value="1"/>
</dbReference>
<dbReference type="HAMAP" id="MF_00044">
    <property type="entry name" value="Asp_tRNA_synth_type1"/>
    <property type="match status" value="1"/>
</dbReference>
<dbReference type="InterPro" id="IPR004364">
    <property type="entry name" value="Aa-tRNA-synt_II"/>
</dbReference>
<dbReference type="InterPro" id="IPR006195">
    <property type="entry name" value="aa-tRNA-synth_II"/>
</dbReference>
<dbReference type="InterPro" id="IPR045864">
    <property type="entry name" value="aa-tRNA-synth_II/BPL/LPL"/>
</dbReference>
<dbReference type="InterPro" id="IPR004524">
    <property type="entry name" value="Asp-tRNA-ligase_1"/>
</dbReference>
<dbReference type="InterPro" id="IPR047089">
    <property type="entry name" value="Asp-tRNA-ligase_1_N"/>
</dbReference>
<dbReference type="InterPro" id="IPR002312">
    <property type="entry name" value="Asp/Asn-tRNA-synth_IIb"/>
</dbReference>
<dbReference type="InterPro" id="IPR047090">
    <property type="entry name" value="AspRS_core"/>
</dbReference>
<dbReference type="InterPro" id="IPR004115">
    <property type="entry name" value="GAD-like_sf"/>
</dbReference>
<dbReference type="InterPro" id="IPR012340">
    <property type="entry name" value="NA-bd_OB-fold"/>
</dbReference>
<dbReference type="InterPro" id="IPR004365">
    <property type="entry name" value="NA-bd_OB_tRNA"/>
</dbReference>
<dbReference type="NCBIfam" id="TIGR00459">
    <property type="entry name" value="aspS_bact"/>
    <property type="match status" value="1"/>
</dbReference>
<dbReference type="NCBIfam" id="NF001750">
    <property type="entry name" value="PRK00476.1"/>
    <property type="match status" value="1"/>
</dbReference>
<dbReference type="PANTHER" id="PTHR22594:SF5">
    <property type="entry name" value="ASPARTATE--TRNA LIGASE, MITOCHONDRIAL"/>
    <property type="match status" value="1"/>
</dbReference>
<dbReference type="PANTHER" id="PTHR22594">
    <property type="entry name" value="ASPARTYL/LYSYL-TRNA SYNTHETASE"/>
    <property type="match status" value="1"/>
</dbReference>
<dbReference type="Pfam" id="PF00152">
    <property type="entry name" value="tRNA-synt_2"/>
    <property type="match status" value="1"/>
</dbReference>
<dbReference type="Pfam" id="PF01336">
    <property type="entry name" value="tRNA_anti-codon"/>
    <property type="match status" value="1"/>
</dbReference>
<dbReference type="PRINTS" id="PR01042">
    <property type="entry name" value="TRNASYNTHASP"/>
</dbReference>
<dbReference type="SUPFAM" id="SSF55681">
    <property type="entry name" value="Class II aaRS and biotin synthetases"/>
    <property type="match status" value="1"/>
</dbReference>
<dbReference type="SUPFAM" id="SSF55261">
    <property type="entry name" value="GAD domain-like"/>
    <property type="match status" value="1"/>
</dbReference>
<dbReference type="SUPFAM" id="SSF50249">
    <property type="entry name" value="Nucleic acid-binding proteins"/>
    <property type="match status" value="1"/>
</dbReference>
<dbReference type="PROSITE" id="PS50862">
    <property type="entry name" value="AA_TRNA_LIGASE_II"/>
    <property type="match status" value="1"/>
</dbReference>
<feature type="chain" id="PRO_1000006739" description="Aspartate--tRNA(Asp/Asn) ligase">
    <location>
        <begin position="1"/>
        <end position="590"/>
    </location>
</feature>
<feature type="region of interest" description="Aspartate" evidence="1">
    <location>
        <begin position="199"/>
        <end position="202"/>
    </location>
</feature>
<feature type="binding site" evidence="1">
    <location>
        <position position="175"/>
    </location>
    <ligand>
        <name>L-aspartate</name>
        <dbReference type="ChEBI" id="CHEBI:29991"/>
    </ligand>
</feature>
<feature type="binding site" evidence="1">
    <location>
        <begin position="221"/>
        <end position="223"/>
    </location>
    <ligand>
        <name>ATP</name>
        <dbReference type="ChEBI" id="CHEBI:30616"/>
    </ligand>
</feature>
<feature type="binding site" evidence="1">
    <location>
        <position position="221"/>
    </location>
    <ligand>
        <name>L-aspartate</name>
        <dbReference type="ChEBI" id="CHEBI:29991"/>
    </ligand>
</feature>
<feature type="binding site" evidence="1">
    <location>
        <position position="450"/>
    </location>
    <ligand>
        <name>L-aspartate</name>
        <dbReference type="ChEBI" id="CHEBI:29991"/>
    </ligand>
</feature>
<feature type="binding site" evidence="1">
    <location>
        <position position="484"/>
    </location>
    <ligand>
        <name>ATP</name>
        <dbReference type="ChEBI" id="CHEBI:30616"/>
    </ligand>
</feature>
<feature type="binding site" evidence="1">
    <location>
        <position position="491"/>
    </location>
    <ligand>
        <name>L-aspartate</name>
        <dbReference type="ChEBI" id="CHEBI:29991"/>
    </ligand>
</feature>
<feature type="binding site" evidence="1">
    <location>
        <begin position="536"/>
        <end position="539"/>
    </location>
    <ligand>
        <name>ATP</name>
        <dbReference type="ChEBI" id="CHEBI:30616"/>
    </ligand>
</feature>
<feature type="site" description="Important for tRNA non-discrimination" evidence="1">
    <location>
        <position position="33"/>
    </location>
</feature>
<feature type="site" description="Important for tRNA non-discrimination" evidence="1">
    <location>
        <position position="83"/>
    </location>
</feature>
<keyword id="KW-0030">Aminoacyl-tRNA synthetase</keyword>
<keyword id="KW-0067">ATP-binding</keyword>
<keyword id="KW-0963">Cytoplasm</keyword>
<keyword id="KW-0436">Ligase</keyword>
<keyword id="KW-0547">Nucleotide-binding</keyword>
<keyword id="KW-0648">Protein biosynthesis</keyword>
<sequence>MHRYRSHTCGALRESHIDQTVRVSGWCHRIRDHGGLLFIDLRDHYGLTQCVADPDSPAFKDAEKLRAEWVVKIDGKVRRRPEGTDNADLPTGQVEIFITEIEVLGPAGELPLPVFGEQEYPEDIRLKYRFLDLRREKLHQNIMTRGAIVDSMRKRMKEQGFFEFQTPILTASSPEGARDFLVPSRIHPGRFYALPQAPQQYKQLLMMSGFDRYFQIAPCFRDEDPRADRLPGEFYQLDVEMSFITQEDVFAAMEPVITGVFEEFAKGKRVNSVWPRIPFAEAMQKYGSDKPDLRNPIEMQDVSEHFRGSGFKVFARMLEEPRNQVWAIPGKGGGSRAFCDRMNSWAQGEGQPGLGYIMWREGNEGAGPLANNIGPERTEAIRIALGLGAGDAAFFVAGDPAKFVRFAGLARTRVGEELNLVDKEQFALAWVVDFPMYEYNEDDKKVDFSHNPFSMPQGGMEALVTQDPLNIKAFQYDITCNGFEIASGGIRNHRPEAMVKAFEIAGYGEQEVVDRFGGMYRAFQYGAPPHGGMAAGVDRIVMLLCGTNNLREISLFPMNQRAEDLLMGAPSEVTPKQLRELHIRLNLQEE</sequence>